<comment type="function">
    <text evidence="1">One of the primary rRNA binding proteins, it binds directly to 16S rRNA where it helps nucleate assembly of the platform of the 30S subunit by binding and bridging several RNA helices of the 16S rRNA.</text>
</comment>
<comment type="function">
    <text evidence="1">Forms an intersubunit bridge (bridge B4) with the 23S rRNA of the 50S subunit in the ribosome.</text>
</comment>
<comment type="subunit">
    <text evidence="1">Part of the 30S ribosomal subunit. Forms a bridge to the 50S subunit in the 70S ribosome, contacting the 23S rRNA.</text>
</comment>
<comment type="similarity">
    <text evidence="1">Belongs to the universal ribosomal protein uS15 family.</text>
</comment>
<organism>
    <name type="scientific">Vibrio parahaemolyticus serotype O3:K6 (strain RIMD 2210633)</name>
    <dbReference type="NCBI Taxonomy" id="223926"/>
    <lineage>
        <taxon>Bacteria</taxon>
        <taxon>Pseudomonadati</taxon>
        <taxon>Pseudomonadota</taxon>
        <taxon>Gammaproteobacteria</taxon>
        <taxon>Vibrionales</taxon>
        <taxon>Vibrionaceae</taxon>
        <taxon>Vibrio</taxon>
    </lineage>
</organism>
<dbReference type="EMBL" id="BA000031">
    <property type="protein sequence ID" value="BAC60716.1"/>
    <property type="molecule type" value="Genomic_DNA"/>
</dbReference>
<dbReference type="RefSeq" id="NP_798832.1">
    <property type="nucleotide sequence ID" value="NC_004603.1"/>
</dbReference>
<dbReference type="RefSeq" id="WP_005456110.1">
    <property type="nucleotide sequence ID" value="NC_004603.1"/>
</dbReference>
<dbReference type="SMR" id="Q87M05"/>
<dbReference type="GeneID" id="1189966"/>
<dbReference type="KEGG" id="vpa:VP2453"/>
<dbReference type="PATRIC" id="fig|223926.6.peg.2354"/>
<dbReference type="eggNOG" id="COG0184">
    <property type="taxonomic scope" value="Bacteria"/>
</dbReference>
<dbReference type="HOGENOM" id="CLU_148518_0_0_6"/>
<dbReference type="Proteomes" id="UP000002493">
    <property type="component" value="Chromosome 1"/>
</dbReference>
<dbReference type="GO" id="GO:0022627">
    <property type="term" value="C:cytosolic small ribosomal subunit"/>
    <property type="evidence" value="ECO:0007669"/>
    <property type="project" value="TreeGrafter"/>
</dbReference>
<dbReference type="GO" id="GO:0019843">
    <property type="term" value="F:rRNA binding"/>
    <property type="evidence" value="ECO:0007669"/>
    <property type="project" value="UniProtKB-UniRule"/>
</dbReference>
<dbReference type="GO" id="GO:0003735">
    <property type="term" value="F:structural constituent of ribosome"/>
    <property type="evidence" value="ECO:0007669"/>
    <property type="project" value="InterPro"/>
</dbReference>
<dbReference type="GO" id="GO:0006412">
    <property type="term" value="P:translation"/>
    <property type="evidence" value="ECO:0007669"/>
    <property type="project" value="UniProtKB-UniRule"/>
</dbReference>
<dbReference type="CDD" id="cd00353">
    <property type="entry name" value="Ribosomal_S15p_S13e"/>
    <property type="match status" value="1"/>
</dbReference>
<dbReference type="FunFam" id="1.10.287.10:FF:000002">
    <property type="entry name" value="30S ribosomal protein S15"/>
    <property type="match status" value="1"/>
</dbReference>
<dbReference type="Gene3D" id="6.10.250.3130">
    <property type="match status" value="1"/>
</dbReference>
<dbReference type="Gene3D" id="1.10.287.10">
    <property type="entry name" value="S15/NS1, RNA-binding"/>
    <property type="match status" value="1"/>
</dbReference>
<dbReference type="HAMAP" id="MF_01343_B">
    <property type="entry name" value="Ribosomal_uS15_B"/>
    <property type="match status" value="1"/>
</dbReference>
<dbReference type="InterPro" id="IPR000589">
    <property type="entry name" value="Ribosomal_uS15"/>
</dbReference>
<dbReference type="InterPro" id="IPR005290">
    <property type="entry name" value="Ribosomal_uS15_bac-type"/>
</dbReference>
<dbReference type="InterPro" id="IPR009068">
    <property type="entry name" value="uS15_NS1_RNA-bd_sf"/>
</dbReference>
<dbReference type="NCBIfam" id="TIGR00952">
    <property type="entry name" value="S15_bact"/>
    <property type="match status" value="1"/>
</dbReference>
<dbReference type="PANTHER" id="PTHR23321">
    <property type="entry name" value="RIBOSOMAL PROTEIN S15, BACTERIAL AND ORGANELLAR"/>
    <property type="match status" value="1"/>
</dbReference>
<dbReference type="PANTHER" id="PTHR23321:SF26">
    <property type="entry name" value="SMALL RIBOSOMAL SUBUNIT PROTEIN US15M"/>
    <property type="match status" value="1"/>
</dbReference>
<dbReference type="Pfam" id="PF00312">
    <property type="entry name" value="Ribosomal_S15"/>
    <property type="match status" value="1"/>
</dbReference>
<dbReference type="SMART" id="SM01387">
    <property type="entry name" value="Ribosomal_S15"/>
    <property type="match status" value="1"/>
</dbReference>
<dbReference type="SUPFAM" id="SSF47060">
    <property type="entry name" value="S15/NS1 RNA-binding domain"/>
    <property type="match status" value="1"/>
</dbReference>
<dbReference type="PROSITE" id="PS00362">
    <property type="entry name" value="RIBOSOMAL_S15"/>
    <property type="match status" value="1"/>
</dbReference>
<name>RS15_VIBPA</name>
<protein>
    <recommendedName>
        <fullName evidence="1">Small ribosomal subunit protein uS15</fullName>
    </recommendedName>
    <alternativeName>
        <fullName evidence="2">30S ribosomal protein S15</fullName>
    </alternativeName>
</protein>
<keyword id="KW-0687">Ribonucleoprotein</keyword>
<keyword id="KW-0689">Ribosomal protein</keyword>
<keyword id="KW-0694">RNA-binding</keyword>
<keyword id="KW-0699">rRNA-binding</keyword>
<accession>Q87M05</accession>
<feature type="chain" id="PRO_0000115583" description="Small ribosomal subunit protein uS15">
    <location>
        <begin position="1"/>
        <end position="89"/>
    </location>
</feature>
<evidence type="ECO:0000255" key="1">
    <source>
        <dbReference type="HAMAP-Rule" id="MF_01343"/>
    </source>
</evidence>
<evidence type="ECO:0000305" key="2"/>
<gene>
    <name evidence="1" type="primary">rpsO</name>
    <name type="ordered locus">VP2453</name>
</gene>
<sequence>MSLNAETKAAIVAEYAQSEGDTGSPEVQVALLTASINHLQGHFKAHKGDHHSRRGLLRMVSRRRKLLDYLKGKDLARYQDLIKRLGLRR</sequence>
<reference key="1">
    <citation type="journal article" date="2003" name="Lancet">
        <title>Genome sequence of Vibrio parahaemolyticus: a pathogenic mechanism distinct from that of V. cholerae.</title>
        <authorList>
            <person name="Makino K."/>
            <person name="Oshima K."/>
            <person name="Kurokawa K."/>
            <person name="Yokoyama K."/>
            <person name="Uda T."/>
            <person name="Tagomori K."/>
            <person name="Iijima Y."/>
            <person name="Najima M."/>
            <person name="Nakano M."/>
            <person name="Yamashita A."/>
            <person name="Kubota Y."/>
            <person name="Kimura S."/>
            <person name="Yasunaga T."/>
            <person name="Honda T."/>
            <person name="Shinagawa H."/>
            <person name="Hattori M."/>
            <person name="Iida T."/>
        </authorList>
    </citation>
    <scope>NUCLEOTIDE SEQUENCE [LARGE SCALE GENOMIC DNA]</scope>
    <source>
        <strain>RIMD 2210633</strain>
    </source>
</reference>
<proteinExistence type="inferred from homology"/>